<proteinExistence type="inferred from homology"/>
<keyword id="KW-0227">DNA damage</keyword>
<keyword id="KW-0234">DNA repair</keyword>
<name>MUTL_YERPP</name>
<feature type="chain" id="PRO_1000010108" description="DNA mismatch repair protein MutL">
    <location>
        <begin position="1"/>
        <end position="635"/>
    </location>
</feature>
<feature type="region of interest" description="Disordered" evidence="2">
    <location>
        <begin position="359"/>
        <end position="399"/>
    </location>
</feature>
<feature type="compositionally biased region" description="Low complexity" evidence="2">
    <location>
        <begin position="364"/>
        <end position="377"/>
    </location>
</feature>
<feature type="compositionally biased region" description="Basic and acidic residues" evidence="2">
    <location>
        <begin position="378"/>
        <end position="399"/>
    </location>
</feature>
<evidence type="ECO:0000255" key="1">
    <source>
        <dbReference type="HAMAP-Rule" id="MF_00149"/>
    </source>
</evidence>
<evidence type="ECO:0000256" key="2">
    <source>
        <dbReference type="SAM" id="MobiDB-lite"/>
    </source>
</evidence>
<dbReference type="EMBL" id="CP000668">
    <property type="protein sequence ID" value="ABP41953.1"/>
    <property type="molecule type" value="Genomic_DNA"/>
</dbReference>
<dbReference type="RefSeq" id="WP_002209148.1">
    <property type="nucleotide sequence ID" value="NZ_CP009715.1"/>
</dbReference>
<dbReference type="SMR" id="A4TRP1"/>
<dbReference type="GeneID" id="57974236"/>
<dbReference type="KEGG" id="ypp:YPDSF_3603"/>
<dbReference type="PATRIC" id="fig|386656.14.peg.263"/>
<dbReference type="GO" id="GO:0032300">
    <property type="term" value="C:mismatch repair complex"/>
    <property type="evidence" value="ECO:0007669"/>
    <property type="project" value="InterPro"/>
</dbReference>
<dbReference type="GO" id="GO:0005524">
    <property type="term" value="F:ATP binding"/>
    <property type="evidence" value="ECO:0007669"/>
    <property type="project" value="InterPro"/>
</dbReference>
<dbReference type="GO" id="GO:0016887">
    <property type="term" value="F:ATP hydrolysis activity"/>
    <property type="evidence" value="ECO:0007669"/>
    <property type="project" value="InterPro"/>
</dbReference>
<dbReference type="GO" id="GO:0140664">
    <property type="term" value="F:ATP-dependent DNA damage sensor activity"/>
    <property type="evidence" value="ECO:0007669"/>
    <property type="project" value="InterPro"/>
</dbReference>
<dbReference type="GO" id="GO:0030983">
    <property type="term" value="F:mismatched DNA binding"/>
    <property type="evidence" value="ECO:0007669"/>
    <property type="project" value="InterPro"/>
</dbReference>
<dbReference type="GO" id="GO:0006298">
    <property type="term" value="P:mismatch repair"/>
    <property type="evidence" value="ECO:0007669"/>
    <property type="project" value="UniProtKB-UniRule"/>
</dbReference>
<dbReference type="CDD" id="cd16926">
    <property type="entry name" value="HATPase_MutL-MLH-PMS-like"/>
    <property type="match status" value="1"/>
</dbReference>
<dbReference type="CDD" id="cd03482">
    <property type="entry name" value="MutL_Trans_MutL"/>
    <property type="match status" value="1"/>
</dbReference>
<dbReference type="FunFam" id="3.30.230.10:FF:000013">
    <property type="entry name" value="DNA mismatch repair endonuclease MutL"/>
    <property type="match status" value="1"/>
</dbReference>
<dbReference type="FunFam" id="3.30.565.10:FF:000003">
    <property type="entry name" value="DNA mismatch repair endonuclease MutL"/>
    <property type="match status" value="1"/>
</dbReference>
<dbReference type="FunFam" id="3.30.1370.100:FF:000002">
    <property type="entry name" value="DNA mismatch repair protein MutL"/>
    <property type="match status" value="1"/>
</dbReference>
<dbReference type="Gene3D" id="3.30.230.10">
    <property type="match status" value="1"/>
</dbReference>
<dbReference type="Gene3D" id="3.30.565.10">
    <property type="entry name" value="Histidine kinase-like ATPase, C-terminal domain"/>
    <property type="match status" value="1"/>
</dbReference>
<dbReference type="Gene3D" id="3.30.1540.20">
    <property type="entry name" value="MutL, C-terminal domain, dimerisation subdomain"/>
    <property type="match status" value="1"/>
</dbReference>
<dbReference type="Gene3D" id="3.30.1370.100">
    <property type="entry name" value="MutL, C-terminal domain, regulatory subdomain"/>
    <property type="match status" value="1"/>
</dbReference>
<dbReference type="HAMAP" id="MF_00149">
    <property type="entry name" value="DNA_mis_repair"/>
    <property type="match status" value="1"/>
</dbReference>
<dbReference type="InterPro" id="IPR014762">
    <property type="entry name" value="DNA_mismatch_repair_CS"/>
</dbReference>
<dbReference type="InterPro" id="IPR020667">
    <property type="entry name" value="DNA_mismatch_repair_MutL"/>
</dbReference>
<dbReference type="InterPro" id="IPR013507">
    <property type="entry name" value="DNA_mismatch_S5_2-like"/>
</dbReference>
<dbReference type="InterPro" id="IPR036890">
    <property type="entry name" value="HATPase_C_sf"/>
</dbReference>
<dbReference type="InterPro" id="IPR002099">
    <property type="entry name" value="MutL/Mlh/PMS"/>
</dbReference>
<dbReference type="InterPro" id="IPR038973">
    <property type="entry name" value="MutL/Mlh/Pms-like"/>
</dbReference>
<dbReference type="InterPro" id="IPR014790">
    <property type="entry name" value="MutL_C"/>
</dbReference>
<dbReference type="InterPro" id="IPR042120">
    <property type="entry name" value="MutL_C_dimsub"/>
</dbReference>
<dbReference type="InterPro" id="IPR042121">
    <property type="entry name" value="MutL_C_regsub"/>
</dbReference>
<dbReference type="InterPro" id="IPR037198">
    <property type="entry name" value="MutL_C_sf"/>
</dbReference>
<dbReference type="InterPro" id="IPR020568">
    <property type="entry name" value="Ribosomal_Su5_D2-typ_SF"/>
</dbReference>
<dbReference type="InterPro" id="IPR014721">
    <property type="entry name" value="Ribsml_uS5_D2-typ_fold_subgr"/>
</dbReference>
<dbReference type="NCBIfam" id="TIGR00585">
    <property type="entry name" value="mutl"/>
    <property type="match status" value="1"/>
</dbReference>
<dbReference type="NCBIfam" id="NF000948">
    <property type="entry name" value="PRK00095.1-1"/>
    <property type="match status" value="1"/>
</dbReference>
<dbReference type="PANTHER" id="PTHR10073">
    <property type="entry name" value="DNA MISMATCH REPAIR PROTEIN MLH, PMS, MUTL"/>
    <property type="match status" value="1"/>
</dbReference>
<dbReference type="PANTHER" id="PTHR10073:SF12">
    <property type="entry name" value="DNA MISMATCH REPAIR PROTEIN MLH1"/>
    <property type="match status" value="1"/>
</dbReference>
<dbReference type="Pfam" id="PF01119">
    <property type="entry name" value="DNA_mis_repair"/>
    <property type="match status" value="1"/>
</dbReference>
<dbReference type="Pfam" id="PF13589">
    <property type="entry name" value="HATPase_c_3"/>
    <property type="match status" value="1"/>
</dbReference>
<dbReference type="Pfam" id="PF08676">
    <property type="entry name" value="MutL_C"/>
    <property type="match status" value="1"/>
</dbReference>
<dbReference type="SMART" id="SM01340">
    <property type="entry name" value="DNA_mis_repair"/>
    <property type="match status" value="1"/>
</dbReference>
<dbReference type="SMART" id="SM00853">
    <property type="entry name" value="MutL_C"/>
    <property type="match status" value="1"/>
</dbReference>
<dbReference type="SUPFAM" id="SSF55874">
    <property type="entry name" value="ATPase domain of HSP90 chaperone/DNA topoisomerase II/histidine kinase"/>
    <property type="match status" value="1"/>
</dbReference>
<dbReference type="SUPFAM" id="SSF118116">
    <property type="entry name" value="DNA mismatch repair protein MutL"/>
    <property type="match status" value="1"/>
</dbReference>
<dbReference type="SUPFAM" id="SSF54211">
    <property type="entry name" value="Ribosomal protein S5 domain 2-like"/>
    <property type="match status" value="1"/>
</dbReference>
<dbReference type="PROSITE" id="PS00058">
    <property type="entry name" value="DNA_MISMATCH_REPAIR_1"/>
    <property type="match status" value="1"/>
</dbReference>
<protein>
    <recommendedName>
        <fullName evidence="1">DNA mismatch repair protein MutL</fullName>
    </recommendedName>
</protein>
<gene>
    <name evidence="1" type="primary">mutL</name>
    <name type="ordered locus">YPDSF_3603</name>
</gene>
<accession>A4TRP1</accession>
<comment type="function">
    <text evidence="1">This protein is involved in the repair of mismatches in DNA. It is required for dam-dependent methyl-directed DNA mismatch repair. May act as a 'molecular matchmaker', a protein that promotes the formation of a stable complex between two or more DNA-binding proteins in an ATP-dependent manner without itself being part of a final effector complex.</text>
</comment>
<comment type="similarity">
    <text evidence="1">Belongs to the DNA mismatch repair MutL/HexB family.</text>
</comment>
<organism>
    <name type="scientific">Yersinia pestis (strain Pestoides F)</name>
    <dbReference type="NCBI Taxonomy" id="386656"/>
    <lineage>
        <taxon>Bacteria</taxon>
        <taxon>Pseudomonadati</taxon>
        <taxon>Pseudomonadota</taxon>
        <taxon>Gammaproteobacteria</taxon>
        <taxon>Enterobacterales</taxon>
        <taxon>Yersiniaceae</taxon>
        <taxon>Yersinia</taxon>
    </lineage>
</organism>
<sequence>MPIQILPPQLANQIAAGEVVERPASVVKELVENSLDAGATRIDIDIERGGAKLIRIRDNGCGISKDDLALALARHATSKISSLEDLEAILSMGFRGEALASISSVSRLILTSRTAEQSEAWQAYAEGRDMAVTIKPAAHPVGSTLEVLDLFYNTPARRKFMRTEKTEFGHIDEVVRRIALARFDVAINLNHNGKLIRQYRAAPDPAQHERRLASICGPAFLQHALAIAWQHGDLNIHGWVADPAASHTLSEMQYCYVNNRMMRDRLINHAIRQAYQDRLNDAQQPAYVLYLDIDPHQVDVNVHPAKHEVRFHQARLVHDFIYQAVTAVLQQTNAPILNISEEGEVDAPRWQQENRVAAGTNKYAQPEAAKSSAAEQAVARERSSARERAAPAYKEDHPYQKQQGELYRQLLQPSAAAKPATSPAAIPASSVSSPSIPVQRITQAEEPLHGDNYSFGRVLTVFPPCYALIEYQGGVALLSLAVAERWLKQAQLSPPEEGLRPQPLLIPLKITLDKNEIAACQNHEKLLITMGIELSVEQGRATLRAVSLPLRQQNLQKLIPELLGYLSQHEEISPDTLATWLARHLGSEHEVWNVSQAIQLLTEVERLCPQLVQSPPAGLLQPIDIKAALATLTHE</sequence>
<reference key="1">
    <citation type="submission" date="2007-02" db="EMBL/GenBank/DDBJ databases">
        <title>Complete sequence of chromosome of Yersinia pestis Pestoides F.</title>
        <authorList>
            <consortium name="US DOE Joint Genome Institute"/>
            <person name="Copeland A."/>
            <person name="Lucas S."/>
            <person name="Lapidus A."/>
            <person name="Barry K."/>
            <person name="Detter J.C."/>
            <person name="Glavina del Rio T."/>
            <person name="Hammon N."/>
            <person name="Israni S."/>
            <person name="Dalin E."/>
            <person name="Tice H."/>
            <person name="Pitluck S."/>
            <person name="Di Bartolo G."/>
            <person name="Chain P."/>
            <person name="Malfatti S."/>
            <person name="Shin M."/>
            <person name="Vergez L."/>
            <person name="Schmutz J."/>
            <person name="Larimer F."/>
            <person name="Land M."/>
            <person name="Hauser L."/>
            <person name="Worsham P."/>
            <person name="Chu M."/>
            <person name="Bearden S."/>
            <person name="Garcia E."/>
            <person name="Richardson P."/>
        </authorList>
    </citation>
    <scope>NUCLEOTIDE SEQUENCE [LARGE SCALE GENOMIC DNA]</scope>
    <source>
        <strain>Pestoides F</strain>
    </source>
</reference>